<dbReference type="EMBL" id="BC078997">
    <property type="protein sequence ID" value="AAH78997.1"/>
    <property type="molecule type" value="mRNA"/>
</dbReference>
<dbReference type="RefSeq" id="NP_001011951.1">
    <property type="nucleotide sequence ID" value="NM_001011951.1"/>
</dbReference>
<dbReference type="SMR" id="Q6AYL5"/>
<dbReference type="FunCoup" id="Q6AYL5">
    <property type="interactions" value="3300"/>
</dbReference>
<dbReference type="STRING" id="10116.ENSRNOP00000028758"/>
<dbReference type="GlyGen" id="Q6AYL5">
    <property type="glycosylation" value="2 sites"/>
</dbReference>
<dbReference type="PhosphoSitePlus" id="Q6AYL5"/>
<dbReference type="jPOST" id="Q6AYL5"/>
<dbReference type="PaxDb" id="10116-ENSRNOP00000028758"/>
<dbReference type="GeneID" id="295270"/>
<dbReference type="KEGG" id="rno:295270"/>
<dbReference type="UCSC" id="RGD:1309667">
    <property type="organism name" value="rat"/>
</dbReference>
<dbReference type="AGR" id="RGD:1309667"/>
<dbReference type="CTD" id="10262"/>
<dbReference type="RGD" id="1309667">
    <property type="gene designation" value="Sf3b4"/>
</dbReference>
<dbReference type="VEuPathDB" id="HostDB:ENSRNOG00000021181"/>
<dbReference type="eggNOG" id="KOG0131">
    <property type="taxonomic scope" value="Eukaryota"/>
</dbReference>
<dbReference type="HOGENOM" id="CLU_012062_21_0_1"/>
<dbReference type="InParanoid" id="Q6AYL5"/>
<dbReference type="OrthoDB" id="10259687at2759"/>
<dbReference type="PhylomeDB" id="Q6AYL5"/>
<dbReference type="TreeFam" id="TF300890"/>
<dbReference type="Reactome" id="R-RNO-72163">
    <property type="pathway name" value="mRNA Splicing - Major Pathway"/>
</dbReference>
<dbReference type="Reactome" id="R-RNO-72165">
    <property type="pathway name" value="mRNA Splicing - Minor Pathway"/>
</dbReference>
<dbReference type="PRO" id="PR:Q6AYL5"/>
<dbReference type="Proteomes" id="UP000002494">
    <property type="component" value="Chromosome 2"/>
</dbReference>
<dbReference type="Bgee" id="ENSRNOG00000021181">
    <property type="expression patterns" value="Expressed in testis and 18 other cell types or tissues"/>
</dbReference>
<dbReference type="GO" id="GO:0005634">
    <property type="term" value="C:nucleus"/>
    <property type="evidence" value="ECO:0000250"/>
    <property type="project" value="UniProtKB"/>
</dbReference>
<dbReference type="GO" id="GO:0071011">
    <property type="term" value="C:precatalytic spliceosome"/>
    <property type="evidence" value="ECO:0000318"/>
    <property type="project" value="GO_Central"/>
</dbReference>
<dbReference type="GO" id="GO:0005681">
    <property type="term" value="C:spliceosomal complex"/>
    <property type="evidence" value="ECO:0000266"/>
    <property type="project" value="RGD"/>
</dbReference>
<dbReference type="GO" id="GO:0005689">
    <property type="term" value="C:U12-type spliceosomal complex"/>
    <property type="evidence" value="ECO:0000266"/>
    <property type="project" value="RGD"/>
</dbReference>
<dbReference type="GO" id="GO:0005686">
    <property type="term" value="C:U2 snRNP"/>
    <property type="evidence" value="ECO:0000318"/>
    <property type="project" value="GO_Central"/>
</dbReference>
<dbReference type="GO" id="GO:0071005">
    <property type="term" value="C:U2-type precatalytic spliceosome"/>
    <property type="evidence" value="ECO:0000266"/>
    <property type="project" value="RGD"/>
</dbReference>
<dbReference type="GO" id="GO:0005684">
    <property type="term" value="C:U2-type spliceosomal complex"/>
    <property type="evidence" value="ECO:0000250"/>
    <property type="project" value="UniProtKB"/>
</dbReference>
<dbReference type="GO" id="GO:0003723">
    <property type="term" value="F:RNA binding"/>
    <property type="evidence" value="ECO:0000318"/>
    <property type="project" value="GO_Central"/>
</dbReference>
<dbReference type="GO" id="GO:1990935">
    <property type="term" value="F:splicing factor binding"/>
    <property type="evidence" value="ECO:0000250"/>
    <property type="project" value="UniProtKB"/>
</dbReference>
<dbReference type="GO" id="GO:0000398">
    <property type="term" value="P:mRNA splicing, via spliceosome"/>
    <property type="evidence" value="ECO:0000250"/>
    <property type="project" value="UniProtKB"/>
</dbReference>
<dbReference type="CDD" id="cd12334">
    <property type="entry name" value="RRM1_SF3B4"/>
    <property type="match status" value="1"/>
</dbReference>
<dbReference type="CDD" id="cd12335">
    <property type="entry name" value="RRM2_SF3B4"/>
    <property type="match status" value="1"/>
</dbReference>
<dbReference type="FunFam" id="3.30.70.330:FF:000141">
    <property type="entry name" value="Splicing factor 3b subunit 4"/>
    <property type="match status" value="1"/>
</dbReference>
<dbReference type="FunFam" id="3.30.70.330:FF:000059">
    <property type="entry name" value="splicing factor 3B subunit 4"/>
    <property type="match status" value="1"/>
</dbReference>
<dbReference type="Gene3D" id="3.30.70.330">
    <property type="match status" value="2"/>
</dbReference>
<dbReference type="InterPro" id="IPR012677">
    <property type="entry name" value="Nucleotide-bd_a/b_plait_sf"/>
</dbReference>
<dbReference type="InterPro" id="IPR035979">
    <property type="entry name" value="RBD_domain_sf"/>
</dbReference>
<dbReference type="InterPro" id="IPR000504">
    <property type="entry name" value="RRM_dom"/>
</dbReference>
<dbReference type="InterPro" id="IPR034158">
    <property type="entry name" value="SF3B4_RRM1"/>
</dbReference>
<dbReference type="InterPro" id="IPR034159">
    <property type="entry name" value="SF3B4_RRM2"/>
</dbReference>
<dbReference type="InterPro" id="IPR052084">
    <property type="entry name" value="SF3B4_spliceosome_assoc"/>
</dbReference>
<dbReference type="PANTHER" id="PTHR48030">
    <property type="entry name" value="SPLICING FACTOR 3B SUBUNIT 4"/>
    <property type="match status" value="1"/>
</dbReference>
<dbReference type="PANTHER" id="PTHR48030:SF3">
    <property type="entry name" value="SPLICING FACTOR 3B SUBUNIT 4"/>
    <property type="match status" value="1"/>
</dbReference>
<dbReference type="Pfam" id="PF00076">
    <property type="entry name" value="RRM_1"/>
    <property type="match status" value="2"/>
</dbReference>
<dbReference type="PRINTS" id="PR01217">
    <property type="entry name" value="PRICHEXTENSN"/>
</dbReference>
<dbReference type="SMART" id="SM00360">
    <property type="entry name" value="RRM"/>
    <property type="match status" value="2"/>
</dbReference>
<dbReference type="SUPFAM" id="SSF54928">
    <property type="entry name" value="RNA-binding domain, RBD"/>
    <property type="match status" value="1"/>
</dbReference>
<dbReference type="PROSITE" id="PS50102">
    <property type="entry name" value="RRM"/>
    <property type="match status" value="2"/>
</dbReference>
<reference key="1">
    <citation type="journal article" date="2004" name="Genome Res.">
        <title>The status, quality, and expansion of the NIH full-length cDNA project: the Mammalian Gene Collection (MGC).</title>
        <authorList>
            <consortium name="The MGC Project Team"/>
        </authorList>
    </citation>
    <scope>NUCLEOTIDE SEQUENCE [LARGE SCALE MRNA]</scope>
    <source>
        <tissue>Testis</tissue>
    </source>
</reference>
<sequence>MAAGPISERNQDATVYVGGLDEKVSEPLLWELFLQAGPVVNTHMPKDRVTGQHQGYGFVEFLSEEDADYAIKIMNMIKLYGKPIRVNKASAHNKNLDVGANIFIGNLDPEIDEKLLYDTFSAFGVILQTPKIMRDPDTGNSKGYAFINFASFDASDAAIEAMNGQYLCNRPITVSYAFKKDSKGERHGSAAERLLAAQNPLSQADRPHQLFADAPPPPSAPNPVVSSLGSGLPPPGMPPPGSFPPPVPPPGALPPGIPPAMPPPPMPPGAGGHGPPAAGTPGAGHPGHGHSHPHPFPPGGMPHPGMSQMQLAHHGPHGLGHPHAGPPGSGGQPPPRPPPGMPHPGPPPMGMPPRGPPFGSPMGHPGPMPPHGMRGPPPLMPPHGYTGPPRPPPYGYQRGPLPPPRPTPRPPVPPRGPLRGPLPQ</sequence>
<protein>
    <recommendedName>
        <fullName>Splicing factor 3B subunit 4</fullName>
    </recommendedName>
</protein>
<evidence type="ECO:0000250" key="1">
    <source>
        <dbReference type="UniProtKB" id="Q15427"/>
    </source>
</evidence>
<evidence type="ECO:0000255" key="2">
    <source>
        <dbReference type="PROSITE-ProRule" id="PRU00176"/>
    </source>
</evidence>
<evidence type="ECO:0000256" key="3">
    <source>
        <dbReference type="SAM" id="MobiDB-lite"/>
    </source>
</evidence>
<evidence type="ECO:0000305" key="4"/>
<organism>
    <name type="scientific">Rattus norvegicus</name>
    <name type="common">Rat</name>
    <dbReference type="NCBI Taxonomy" id="10116"/>
    <lineage>
        <taxon>Eukaryota</taxon>
        <taxon>Metazoa</taxon>
        <taxon>Chordata</taxon>
        <taxon>Craniata</taxon>
        <taxon>Vertebrata</taxon>
        <taxon>Euteleostomi</taxon>
        <taxon>Mammalia</taxon>
        <taxon>Eutheria</taxon>
        <taxon>Euarchontoglires</taxon>
        <taxon>Glires</taxon>
        <taxon>Rodentia</taxon>
        <taxon>Myomorpha</taxon>
        <taxon>Muroidea</taxon>
        <taxon>Muridae</taxon>
        <taxon>Murinae</taxon>
        <taxon>Rattus</taxon>
    </lineage>
</organism>
<gene>
    <name type="primary">Sf3b4</name>
</gene>
<keyword id="KW-0007">Acetylation</keyword>
<keyword id="KW-0507">mRNA processing</keyword>
<keyword id="KW-0508">mRNA splicing</keyword>
<keyword id="KW-0539">Nucleus</keyword>
<keyword id="KW-0597">Phosphoprotein</keyword>
<keyword id="KW-1185">Reference proteome</keyword>
<keyword id="KW-0677">Repeat</keyword>
<keyword id="KW-0694">RNA-binding</keyword>
<keyword id="KW-0747">Spliceosome</keyword>
<feature type="initiator methionine" description="Removed" evidence="1">
    <location>
        <position position="1"/>
    </location>
</feature>
<feature type="chain" id="PRO_0000328586" description="Splicing factor 3B subunit 4">
    <location>
        <begin position="2"/>
        <end position="424"/>
    </location>
</feature>
<feature type="domain" description="RRM 1" evidence="2">
    <location>
        <begin position="13"/>
        <end position="91"/>
    </location>
</feature>
<feature type="domain" description="RRM 2" evidence="2">
    <location>
        <begin position="100"/>
        <end position="179"/>
    </location>
</feature>
<feature type="region of interest" description="Disordered" evidence="3">
    <location>
        <begin position="207"/>
        <end position="424"/>
    </location>
</feature>
<feature type="compositionally biased region" description="Low complexity" evidence="3">
    <location>
        <begin position="222"/>
        <end position="231"/>
    </location>
</feature>
<feature type="compositionally biased region" description="Pro residues" evidence="3">
    <location>
        <begin position="232"/>
        <end position="268"/>
    </location>
</feature>
<feature type="compositionally biased region" description="Low complexity" evidence="3">
    <location>
        <begin position="303"/>
        <end position="323"/>
    </location>
</feature>
<feature type="compositionally biased region" description="Pro residues" evidence="3">
    <location>
        <begin position="332"/>
        <end position="381"/>
    </location>
</feature>
<feature type="compositionally biased region" description="Pro residues" evidence="3">
    <location>
        <begin position="388"/>
        <end position="424"/>
    </location>
</feature>
<feature type="modified residue" description="N-acetylalanine" evidence="1">
    <location>
        <position position="2"/>
    </location>
</feature>
<feature type="modified residue" description="Phosphotyrosine" evidence="1">
    <location>
        <position position="56"/>
    </location>
</feature>
<accession>Q6AYL5</accession>
<proteinExistence type="evidence at transcript level"/>
<name>SF3B4_RAT</name>
<comment type="function">
    <text evidence="1">Component of the 17S U2 SnRNP complex of the spliceosome, a large ribonucleoprotein complex that removes introns from transcribed pre-mRNAs. The 17S U2 SnRNP complex (1) directly participates in early spliceosome assembly and (2) mediates recognition of the intron branch site during pre-mRNA splicing by promoting the selection of the pre-mRNA branch-site adenosine, the nucleophile for the first step of splicing. Within the 17S U2 SnRNP complex, SF3B4 is part of the SF3B subcomplex, which is required for 'A' complex assembly formed by the stable binding of U2 snRNP to the branchpoint sequence in pre-mRNA. Sequence independent binding of SF3A and SF3B subcomplexes upstream of the branch site is essential, it may anchor U2 snRNP to the pre-mRNA. May also be involved in the assembly of the 'E' complex. Also acts as a component of the minor spliceosome, which is involved in the splicing of U12-type introns in pre-mRNAs.</text>
</comment>
<comment type="subunit">
    <text evidence="1">Component of the 17S U2 SnRNP complex, a ribonucleoprotein complex that contains small nuclear RNA (snRNA) U2 and a number of specific proteins. Part of the SF3B subcomplex of the 17S U2 SnRNP complex. SF3B associates with the splicing subcomplex SF3A and a 12S RNA unit to form the U2 small nuclear ribonucleoproteins complex (U2 snRNP). SF3B4 has been found in complex spliceosome 'B' and 'C' as well. Component of the minor (U12-type spliceosome) spliceosome. Found in a complex with PRMT9, SF3B2 and SF3B4.</text>
</comment>
<comment type="subcellular location">
    <subcellularLocation>
        <location evidence="1">Nucleus</location>
    </subcellularLocation>
</comment>
<comment type="similarity">
    <text evidence="4">Belongs to the SF3B4 family.</text>
</comment>